<comment type="function">
    <text evidence="2">Part of an ABC transporter complex involved in erythritol/L-threitol import. Binds erythritol and L-threitol. Functions in the transport for the degradation pathways of erythritol and L-threitol, that allow M.smegmatis to grow on these compounds as the sole carbon source.</text>
</comment>
<comment type="induction">
    <text evidence="2">Up-regulated during growth on erythritol, D-threitol or L-threitol relative to growth on glycerol.</text>
</comment>
<comment type="PTM">
    <text evidence="1">Predicted to be exported by the Tat system. The position of the signal peptide cleavage has not been experimentally proven.</text>
</comment>
<comment type="disruption phenotype">
    <text evidence="2">Cells lacking this gene are defective for growth on erythritol or on L-threitol.</text>
</comment>
<comment type="similarity">
    <text evidence="4">Belongs to the bacterial solute-binding protein 1 family.</text>
</comment>
<proteinExistence type="evidence at transcript level"/>
<keyword id="KW-1185">Reference proteome</keyword>
<keyword id="KW-0732">Signal</keyword>
<keyword id="KW-0762">Sugar transport</keyword>
<keyword id="KW-0813">Transport</keyword>
<feature type="signal peptide" description="Tat-type signal" evidence="1">
    <location>
        <begin position="1"/>
        <end position="38"/>
    </location>
</feature>
<feature type="chain" id="PRO_5005658573" description="Erythritol/L-threitol-binding protein">
    <location>
        <begin position="39"/>
        <end position="477"/>
    </location>
</feature>
<evidence type="ECO:0000255" key="1">
    <source>
        <dbReference type="PROSITE-ProRule" id="PRU00648"/>
    </source>
</evidence>
<evidence type="ECO:0000269" key="2">
    <source>
    </source>
</evidence>
<evidence type="ECO:0000303" key="3">
    <source>
    </source>
</evidence>
<evidence type="ECO:0000305" key="4"/>
<evidence type="ECO:0000312" key="5">
    <source>
        <dbReference type="EMBL" id="ABK76127.1"/>
    </source>
</evidence>
<evidence type="ECO:0000312" key="6">
    <source>
        <dbReference type="EMBL" id="AFP39645.1"/>
    </source>
</evidence>
<gene>
    <name evidence="3" type="primary">eltP</name>
    <name evidence="5" type="ordered locus">MSMEG_3266</name>
    <name evidence="6" type="ordered locus">MSMEI_3182</name>
</gene>
<dbReference type="EMBL" id="CP000480">
    <property type="protein sequence ID" value="ABK76127.1"/>
    <property type="molecule type" value="Genomic_DNA"/>
</dbReference>
<dbReference type="EMBL" id="CP001663">
    <property type="protein sequence ID" value="AFP39645.1"/>
    <property type="molecule type" value="Genomic_DNA"/>
</dbReference>
<dbReference type="RefSeq" id="YP_887577.1">
    <property type="nucleotide sequence ID" value="NC_008596.1"/>
</dbReference>
<dbReference type="SMR" id="A0QXD9"/>
<dbReference type="STRING" id="246196.MSMEG_3266"/>
<dbReference type="PaxDb" id="246196-MSMEI_3182"/>
<dbReference type="KEGG" id="msg:MSMEI_3182"/>
<dbReference type="KEGG" id="msm:MSMEG_3266"/>
<dbReference type="PATRIC" id="fig|246196.19.peg.3227"/>
<dbReference type="eggNOG" id="COG1653">
    <property type="taxonomic scope" value="Bacteria"/>
</dbReference>
<dbReference type="OrthoDB" id="9770625at2"/>
<dbReference type="Proteomes" id="UP000000757">
    <property type="component" value="Chromosome"/>
</dbReference>
<dbReference type="Proteomes" id="UP000006158">
    <property type="component" value="Chromosome"/>
</dbReference>
<dbReference type="GO" id="GO:0030246">
    <property type="term" value="F:carbohydrate binding"/>
    <property type="evidence" value="ECO:0000314"/>
    <property type="project" value="UniProtKB"/>
</dbReference>
<dbReference type="GO" id="GO:0008643">
    <property type="term" value="P:carbohydrate transport"/>
    <property type="evidence" value="ECO:0000317"/>
    <property type="project" value="UniProtKB"/>
</dbReference>
<dbReference type="GO" id="GO:0009758">
    <property type="term" value="P:carbohydrate utilization"/>
    <property type="evidence" value="ECO:0000315"/>
    <property type="project" value="UniProtKB"/>
</dbReference>
<dbReference type="GO" id="GO:0071322">
    <property type="term" value="P:cellular response to carbohydrate stimulus"/>
    <property type="evidence" value="ECO:0000314"/>
    <property type="project" value="UniProtKB"/>
</dbReference>
<dbReference type="Gene3D" id="3.40.190.10">
    <property type="entry name" value="Periplasmic binding protein-like II"/>
    <property type="match status" value="2"/>
</dbReference>
<dbReference type="InterPro" id="IPR050490">
    <property type="entry name" value="Bact_solute-bd_prot1"/>
</dbReference>
<dbReference type="InterPro" id="IPR006059">
    <property type="entry name" value="SBP"/>
</dbReference>
<dbReference type="InterPro" id="IPR006311">
    <property type="entry name" value="TAT_signal"/>
</dbReference>
<dbReference type="PANTHER" id="PTHR43649:SF34">
    <property type="entry name" value="ABC TRANSPORTER PERIPLASMIC-BINDING PROTEIN YCJN-RELATED"/>
    <property type="match status" value="1"/>
</dbReference>
<dbReference type="PANTHER" id="PTHR43649">
    <property type="entry name" value="ARABINOSE-BINDING PROTEIN-RELATED"/>
    <property type="match status" value="1"/>
</dbReference>
<dbReference type="Pfam" id="PF01547">
    <property type="entry name" value="SBP_bac_1"/>
    <property type="match status" value="1"/>
</dbReference>
<dbReference type="SUPFAM" id="SSF53850">
    <property type="entry name" value="Periplasmic binding protein-like II"/>
    <property type="match status" value="1"/>
</dbReference>
<dbReference type="PROSITE" id="PS51318">
    <property type="entry name" value="TAT"/>
    <property type="match status" value="1"/>
</dbReference>
<sequence>MMSRESQPGLHRQLSRRNMLAAMGLAGAAAVSLPVLSACGVGGRTNAPNGASEVTGGFDWRKASGSTINILQTPHPYQQSYQPLLKEFTELTGINVNVDLVPEADYFTKLNTELAGGTGKHDAFMLGAYFIWQYGPPGWIEDLNPWLQNSSATNAEYDFEDIFEGLRTSTRWDFELGNPLGTGGQWAIPWGFENNVVAYNKAYFDQRGITKLPDNFDDFIQLAIDLTDRSENRYGIATRGSKSWATIHPGFMTQYVREGAVDYTFDGTDLVAEMDSDKAVEFTRKWIEMQHKAGPTSWTTYDYPNATGDLGDGTAMMVYDADSATYPKNKPGASAQAGNLGWYPGPAGPDGNYKTNLWTWTWAMNANSRNKLPAWLFIQWATGKESMNKAVEGGIYADPVRQSVFDTTFKRIAADQHGYLETFETVIGSSKIQFTPQKKFFDTTKDWAVALQDIYGGDDAASRLRSLAKTNTSKVNL</sequence>
<organism>
    <name type="scientific">Mycolicibacterium smegmatis (strain ATCC 700084 / mc(2)155)</name>
    <name type="common">Mycobacterium smegmatis</name>
    <dbReference type="NCBI Taxonomy" id="246196"/>
    <lineage>
        <taxon>Bacteria</taxon>
        <taxon>Bacillati</taxon>
        <taxon>Actinomycetota</taxon>
        <taxon>Actinomycetes</taxon>
        <taxon>Mycobacteriales</taxon>
        <taxon>Mycobacteriaceae</taxon>
        <taxon>Mycolicibacterium</taxon>
    </lineage>
</organism>
<accession>A0QXD9</accession>
<name>ELTP_MYCS2</name>
<reference key="1">
    <citation type="submission" date="2006-10" db="EMBL/GenBank/DDBJ databases">
        <authorList>
            <person name="Fleischmann R.D."/>
            <person name="Dodson R.J."/>
            <person name="Haft D.H."/>
            <person name="Merkel J.S."/>
            <person name="Nelson W.C."/>
            <person name="Fraser C.M."/>
        </authorList>
    </citation>
    <scope>NUCLEOTIDE SEQUENCE [LARGE SCALE GENOMIC DNA]</scope>
    <source>
        <strain>ATCC 700084 / mc(2)155</strain>
    </source>
</reference>
<reference key="2">
    <citation type="journal article" date="2007" name="Genome Biol.">
        <title>Interrupted coding sequences in Mycobacterium smegmatis: authentic mutations or sequencing errors?</title>
        <authorList>
            <person name="Deshayes C."/>
            <person name="Perrodou E."/>
            <person name="Gallien S."/>
            <person name="Euphrasie D."/>
            <person name="Schaeffer C."/>
            <person name="Van-Dorsselaer A."/>
            <person name="Poch O."/>
            <person name="Lecompte O."/>
            <person name="Reyrat J.-M."/>
        </authorList>
    </citation>
    <scope>NUCLEOTIDE SEQUENCE [LARGE SCALE GENOMIC DNA]</scope>
    <source>
        <strain>ATCC 700084 / mc(2)155</strain>
    </source>
</reference>
<reference key="3">
    <citation type="journal article" date="2009" name="Genome Res.">
        <title>Ortho-proteogenomics: multiple proteomes investigation through orthology and a new MS-based protocol.</title>
        <authorList>
            <person name="Gallien S."/>
            <person name="Perrodou E."/>
            <person name="Carapito C."/>
            <person name="Deshayes C."/>
            <person name="Reyrat J.-M."/>
            <person name="Van Dorsselaer A."/>
            <person name="Poch O."/>
            <person name="Schaeffer C."/>
            <person name="Lecompte O."/>
        </authorList>
    </citation>
    <scope>NUCLEOTIDE SEQUENCE [LARGE SCALE GENOMIC DNA]</scope>
    <source>
        <strain>ATCC 700084 / mc(2)155</strain>
    </source>
</reference>
<reference key="4">
    <citation type="journal article" date="2015" name="J. Am. Chem. Soc.">
        <title>A general strategy for the discovery of metabolic pathways: D-threitol, L-threitol, and erythritol utilization in Mycobacterium smegmatis.</title>
        <authorList>
            <person name="Huang H."/>
            <person name="Carter M.S."/>
            <person name="Vetting M.W."/>
            <person name="Al-Obaidi N."/>
            <person name="Patskovsky Y."/>
            <person name="Almo S.C."/>
            <person name="Gerlt J.A."/>
        </authorList>
    </citation>
    <scope>FUNCTION</scope>
    <scope>INDUCTION</scope>
    <scope>DISRUPTION PHENOTYPE</scope>
    <source>
        <strain>ATCC 700084 / mc(2)155</strain>
    </source>
</reference>
<protein>
    <recommendedName>
        <fullName evidence="3">Erythritol/L-threitol-binding protein</fullName>
    </recommendedName>
</protein>